<reference key="1">
    <citation type="journal article" date="1994" name="DNA Res.">
        <title>Systematic sequencing of the 180 kilobase region of the Bacillus subtilis chromosome containing the replication origin.</title>
        <authorList>
            <person name="Ogasawara N."/>
            <person name="Nakai S."/>
            <person name="Yoshikawa H."/>
        </authorList>
    </citation>
    <scope>NUCLEOTIDE SEQUENCE [GENOMIC DNA]</scope>
    <source>
        <strain>168</strain>
    </source>
</reference>
<reference key="2">
    <citation type="journal article" date="1997" name="Nature">
        <title>The complete genome sequence of the Gram-positive bacterium Bacillus subtilis.</title>
        <authorList>
            <person name="Kunst F."/>
            <person name="Ogasawara N."/>
            <person name="Moszer I."/>
            <person name="Albertini A.M."/>
            <person name="Alloni G."/>
            <person name="Azevedo V."/>
            <person name="Bertero M.G."/>
            <person name="Bessieres P."/>
            <person name="Bolotin A."/>
            <person name="Borchert S."/>
            <person name="Borriss R."/>
            <person name="Boursier L."/>
            <person name="Brans A."/>
            <person name="Braun M."/>
            <person name="Brignell S.C."/>
            <person name="Bron S."/>
            <person name="Brouillet S."/>
            <person name="Bruschi C.V."/>
            <person name="Caldwell B."/>
            <person name="Capuano V."/>
            <person name="Carter N.M."/>
            <person name="Choi S.-K."/>
            <person name="Codani J.-J."/>
            <person name="Connerton I.F."/>
            <person name="Cummings N.J."/>
            <person name="Daniel R.A."/>
            <person name="Denizot F."/>
            <person name="Devine K.M."/>
            <person name="Duesterhoeft A."/>
            <person name="Ehrlich S.D."/>
            <person name="Emmerson P.T."/>
            <person name="Entian K.-D."/>
            <person name="Errington J."/>
            <person name="Fabret C."/>
            <person name="Ferrari E."/>
            <person name="Foulger D."/>
            <person name="Fritz C."/>
            <person name="Fujita M."/>
            <person name="Fujita Y."/>
            <person name="Fuma S."/>
            <person name="Galizzi A."/>
            <person name="Galleron N."/>
            <person name="Ghim S.-Y."/>
            <person name="Glaser P."/>
            <person name="Goffeau A."/>
            <person name="Golightly E.J."/>
            <person name="Grandi G."/>
            <person name="Guiseppi G."/>
            <person name="Guy B.J."/>
            <person name="Haga K."/>
            <person name="Haiech J."/>
            <person name="Harwood C.R."/>
            <person name="Henaut A."/>
            <person name="Hilbert H."/>
            <person name="Holsappel S."/>
            <person name="Hosono S."/>
            <person name="Hullo M.-F."/>
            <person name="Itaya M."/>
            <person name="Jones L.-M."/>
            <person name="Joris B."/>
            <person name="Karamata D."/>
            <person name="Kasahara Y."/>
            <person name="Klaerr-Blanchard M."/>
            <person name="Klein C."/>
            <person name="Kobayashi Y."/>
            <person name="Koetter P."/>
            <person name="Koningstein G."/>
            <person name="Krogh S."/>
            <person name="Kumano M."/>
            <person name="Kurita K."/>
            <person name="Lapidus A."/>
            <person name="Lardinois S."/>
            <person name="Lauber J."/>
            <person name="Lazarevic V."/>
            <person name="Lee S.-M."/>
            <person name="Levine A."/>
            <person name="Liu H."/>
            <person name="Masuda S."/>
            <person name="Mauel C."/>
            <person name="Medigue C."/>
            <person name="Medina N."/>
            <person name="Mellado R.P."/>
            <person name="Mizuno M."/>
            <person name="Moestl D."/>
            <person name="Nakai S."/>
            <person name="Noback M."/>
            <person name="Noone D."/>
            <person name="O'Reilly M."/>
            <person name="Ogawa K."/>
            <person name="Ogiwara A."/>
            <person name="Oudega B."/>
            <person name="Park S.-H."/>
            <person name="Parro V."/>
            <person name="Pohl T.M."/>
            <person name="Portetelle D."/>
            <person name="Porwollik S."/>
            <person name="Prescott A.M."/>
            <person name="Presecan E."/>
            <person name="Pujic P."/>
            <person name="Purnelle B."/>
            <person name="Rapoport G."/>
            <person name="Rey M."/>
            <person name="Reynolds S."/>
            <person name="Rieger M."/>
            <person name="Rivolta C."/>
            <person name="Rocha E."/>
            <person name="Roche B."/>
            <person name="Rose M."/>
            <person name="Sadaie Y."/>
            <person name="Sato T."/>
            <person name="Scanlan E."/>
            <person name="Schleich S."/>
            <person name="Schroeter R."/>
            <person name="Scoffone F."/>
            <person name="Sekiguchi J."/>
            <person name="Sekowska A."/>
            <person name="Seror S.J."/>
            <person name="Serror P."/>
            <person name="Shin B.-S."/>
            <person name="Soldo B."/>
            <person name="Sorokin A."/>
            <person name="Tacconi E."/>
            <person name="Takagi T."/>
            <person name="Takahashi H."/>
            <person name="Takemaru K."/>
            <person name="Takeuchi M."/>
            <person name="Tamakoshi A."/>
            <person name="Tanaka T."/>
            <person name="Terpstra P."/>
            <person name="Tognoni A."/>
            <person name="Tosato V."/>
            <person name="Uchiyama S."/>
            <person name="Vandenbol M."/>
            <person name="Vannier F."/>
            <person name="Vassarotti A."/>
            <person name="Viari A."/>
            <person name="Wambutt R."/>
            <person name="Wedler E."/>
            <person name="Wedler H."/>
            <person name="Weitzenegger T."/>
            <person name="Winters P."/>
            <person name="Wipat A."/>
            <person name="Yamamoto H."/>
            <person name="Yamane K."/>
            <person name="Yasumoto K."/>
            <person name="Yata K."/>
            <person name="Yoshida K."/>
            <person name="Yoshikawa H.-F."/>
            <person name="Zumstein E."/>
            <person name="Yoshikawa H."/>
            <person name="Danchin A."/>
        </authorList>
    </citation>
    <scope>NUCLEOTIDE SEQUENCE [LARGE SCALE GENOMIC DNA]</scope>
    <source>
        <strain>168</strain>
    </source>
</reference>
<reference key="3">
    <citation type="journal article" date="2003" name="Mol. Microbiol.">
        <title>Identification of additional TnrA-regulated genes of Bacillus subtilis associated with a TnrA box.</title>
        <authorList>
            <person name="Yoshida K."/>
            <person name="Yamaguchi H."/>
            <person name="Kinehara M."/>
            <person name="Ohki Y.-H."/>
            <person name="Nakaura Y."/>
            <person name="Fujita Y."/>
        </authorList>
    </citation>
    <scope>REGULATION BY TNRA</scope>
</reference>
<name>YYCB_BACSU</name>
<gene>
    <name type="primary">yycB</name>
    <name type="ordered locus">BSU40480</name>
</gene>
<comment type="subcellular location">
    <subcellularLocation>
        <location evidence="2">Cell membrane</location>
        <topology evidence="2">Multi-pass membrane protein</topology>
    </subcellularLocation>
</comment>
<comment type="induction">
    <text>Negatively regulated by TnrA under nitrogen-limited conditions.</text>
</comment>
<comment type="similarity">
    <text evidence="2">Belongs to the major facilitator superfamily. Cyanate porter (TC 2.A.1.17) family.</text>
</comment>
<accession>P37482</accession>
<dbReference type="EMBL" id="D26185">
    <property type="protein sequence ID" value="BAA05179.1"/>
    <property type="molecule type" value="Genomic_DNA"/>
</dbReference>
<dbReference type="EMBL" id="AL009126">
    <property type="protein sequence ID" value="CAB16085.1"/>
    <property type="molecule type" value="Genomic_DNA"/>
</dbReference>
<dbReference type="PIR" id="S65973">
    <property type="entry name" value="S65973"/>
</dbReference>
<dbReference type="RefSeq" id="NP_391928.1">
    <property type="nucleotide sequence ID" value="NC_000964.3"/>
</dbReference>
<dbReference type="RefSeq" id="WP_003226917.1">
    <property type="nucleotide sequence ID" value="NZ_OZ025638.1"/>
</dbReference>
<dbReference type="SMR" id="P37482"/>
<dbReference type="FunCoup" id="P37482">
    <property type="interactions" value="77"/>
</dbReference>
<dbReference type="STRING" id="224308.BSU40480"/>
<dbReference type="PaxDb" id="224308-BSU40480"/>
<dbReference type="EnsemblBacteria" id="CAB16085">
    <property type="protein sequence ID" value="CAB16085"/>
    <property type="gene ID" value="BSU_40480"/>
</dbReference>
<dbReference type="GeneID" id="937777"/>
<dbReference type="KEGG" id="bsu:BSU40480"/>
<dbReference type="PATRIC" id="fig|224308.179.peg.4382"/>
<dbReference type="eggNOG" id="COG2807">
    <property type="taxonomic scope" value="Bacteria"/>
</dbReference>
<dbReference type="InParanoid" id="P37482"/>
<dbReference type="OrthoDB" id="9797740at2"/>
<dbReference type="PhylomeDB" id="P37482"/>
<dbReference type="BioCyc" id="BSUB:BSU40480-MONOMER"/>
<dbReference type="Proteomes" id="UP000001570">
    <property type="component" value="Chromosome"/>
</dbReference>
<dbReference type="GO" id="GO:0005886">
    <property type="term" value="C:plasma membrane"/>
    <property type="evidence" value="ECO:0007669"/>
    <property type="project" value="UniProtKB-SubCell"/>
</dbReference>
<dbReference type="GO" id="GO:0022857">
    <property type="term" value="F:transmembrane transporter activity"/>
    <property type="evidence" value="ECO:0007669"/>
    <property type="project" value="InterPro"/>
</dbReference>
<dbReference type="CDD" id="cd17339">
    <property type="entry name" value="MFS_NIMT_CynX_like"/>
    <property type="match status" value="1"/>
</dbReference>
<dbReference type="Gene3D" id="1.20.1250.20">
    <property type="entry name" value="MFS general substrate transporter like domains"/>
    <property type="match status" value="2"/>
</dbReference>
<dbReference type="InterPro" id="IPR004747">
    <property type="entry name" value="CynX-like"/>
</dbReference>
<dbReference type="InterPro" id="IPR011701">
    <property type="entry name" value="MFS"/>
</dbReference>
<dbReference type="InterPro" id="IPR052524">
    <property type="entry name" value="MFS_Cyanate_Porter"/>
</dbReference>
<dbReference type="InterPro" id="IPR020846">
    <property type="entry name" value="MFS_dom"/>
</dbReference>
<dbReference type="InterPro" id="IPR036259">
    <property type="entry name" value="MFS_trans_sf"/>
</dbReference>
<dbReference type="NCBIfam" id="TIGR00896">
    <property type="entry name" value="CynX"/>
    <property type="match status" value="1"/>
</dbReference>
<dbReference type="PANTHER" id="PTHR23523">
    <property type="match status" value="1"/>
</dbReference>
<dbReference type="PANTHER" id="PTHR23523:SF2">
    <property type="entry name" value="2-NITROIMIDAZOLE TRANSPORTER"/>
    <property type="match status" value="1"/>
</dbReference>
<dbReference type="Pfam" id="PF07690">
    <property type="entry name" value="MFS_1"/>
    <property type="match status" value="1"/>
</dbReference>
<dbReference type="SUPFAM" id="SSF103473">
    <property type="entry name" value="MFS general substrate transporter"/>
    <property type="match status" value="1"/>
</dbReference>
<dbReference type="PROSITE" id="PS50850">
    <property type="entry name" value="MFS"/>
    <property type="match status" value="1"/>
</dbReference>
<evidence type="ECO:0000255" key="1"/>
<evidence type="ECO:0000305" key="2"/>
<feature type="chain" id="PRO_0000205708" description="Uncharacterized transporter YycB">
    <location>
        <begin position="1"/>
        <end position="402"/>
    </location>
</feature>
<feature type="transmembrane region" description="Helical" evidence="1">
    <location>
        <begin position="12"/>
        <end position="32"/>
    </location>
</feature>
<feature type="transmembrane region" description="Helical" evidence="1">
    <location>
        <begin position="48"/>
        <end position="68"/>
    </location>
</feature>
<feature type="transmembrane region" description="Helical" evidence="1">
    <location>
        <begin position="80"/>
        <end position="100"/>
    </location>
</feature>
<feature type="transmembrane region" description="Helical" evidence="1">
    <location>
        <begin position="101"/>
        <end position="121"/>
    </location>
</feature>
<feature type="transmembrane region" description="Helical" evidence="1">
    <location>
        <begin position="134"/>
        <end position="154"/>
    </location>
</feature>
<feature type="transmembrane region" description="Helical" evidence="1">
    <location>
        <begin position="168"/>
        <end position="188"/>
    </location>
</feature>
<feature type="transmembrane region" description="Helical" evidence="1">
    <location>
        <begin position="212"/>
        <end position="232"/>
    </location>
</feature>
<feature type="transmembrane region" description="Helical" evidence="1">
    <location>
        <begin position="248"/>
        <end position="268"/>
    </location>
</feature>
<feature type="transmembrane region" description="Helical" evidence="1">
    <location>
        <begin position="291"/>
        <end position="311"/>
    </location>
</feature>
<feature type="transmembrane region" description="Helical" evidence="1">
    <location>
        <begin position="339"/>
        <end position="359"/>
    </location>
</feature>
<feature type="transmembrane region" description="Helical" evidence="1">
    <location>
        <begin position="367"/>
        <end position="387"/>
    </location>
</feature>
<keyword id="KW-1003">Cell membrane</keyword>
<keyword id="KW-0472">Membrane</keyword>
<keyword id="KW-1185">Reference proteome</keyword>
<keyword id="KW-0812">Transmembrane</keyword>
<keyword id="KW-1133">Transmembrane helix</keyword>
<keyword id="KW-0813">Transport</keyword>
<organism>
    <name type="scientific">Bacillus subtilis (strain 168)</name>
    <dbReference type="NCBI Taxonomy" id="224308"/>
    <lineage>
        <taxon>Bacteria</taxon>
        <taxon>Bacillati</taxon>
        <taxon>Bacillota</taxon>
        <taxon>Bacilli</taxon>
        <taxon>Bacillales</taxon>
        <taxon>Bacillaceae</taxon>
        <taxon>Bacillus</taxon>
    </lineage>
</organism>
<proteinExistence type="evidence at transcript level"/>
<protein>
    <recommendedName>
        <fullName>Uncharacterized transporter YycB</fullName>
    </recommendedName>
</protein>
<sequence length="402" mass="43184">MPHPHNKKIQSFWLITGIIFIAFNLRPAITSVGPVISSIRAELHMSNGAAGFLTALPLLSFAVLSPLAPKLGQRLGNERTLWLGLVILLIGVLTRSTGYTAALFFGTALIGVGIAIGNVLLPSLIKHKYPEKPGIMISLYTTSMNIFAALASGVSVPLATQMNGGWKQAFLLWGGLALLALLIWIPQLRHRDTANQTMKLQSSSIWASKMAWYVTIFMGLQSFLFYSSIAWFPEILRSHGIDTATAGWMVSLMQFASLPSTFLTPVLADRVKQQRGIVAALASVYLIGLCGLLAGGSHTLLAIWMIIIGIGQGSSISLALTLIGLRSENAQQAAALSGMSQSFGYLLAAVGPIFVGYLFDQTHSWTMPIVLLIAALIVMGAAGQGAGRDRYIFQSEKQRNSA</sequence>